<name>VM1B1_BOTBA</name>
<accession>P86976</accession>
<keyword id="KW-0903">Direct protein sequencing</keyword>
<keyword id="KW-1015">Disulfide bond</keyword>
<keyword id="KW-1206">Fibrinogenolytic toxin</keyword>
<keyword id="KW-1199">Hemostasis impairing toxin</keyword>
<keyword id="KW-0378">Hydrolase</keyword>
<keyword id="KW-0479">Metal-binding</keyword>
<keyword id="KW-0482">Metalloprotease</keyword>
<keyword id="KW-0645">Protease</keyword>
<keyword id="KW-0964">Secreted</keyword>
<keyword id="KW-0800">Toxin</keyword>
<keyword id="KW-0862">Zinc</keyword>
<dbReference type="EC" id="3.4.24.-" evidence="4"/>
<dbReference type="GO" id="GO:0005576">
    <property type="term" value="C:extracellular region"/>
    <property type="evidence" value="ECO:0000314"/>
    <property type="project" value="UniProtKB"/>
</dbReference>
<dbReference type="GO" id="GO:0005886">
    <property type="term" value="C:plasma membrane"/>
    <property type="evidence" value="ECO:0007669"/>
    <property type="project" value="TreeGrafter"/>
</dbReference>
<dbReference type="GO" id="GO:0046872">
    <property type="term" value="F:metal ion binding"/>
    <property type="evidence" value="ECO:0000314"/>
    <property type="project" value="UniProtKB"/>
</dbReference>
<dbReference type="GO" id="GO:0004222">
    <property type="term" value="F:metalloendopeptidase activity"/>
    <property type="evidence" value="ECO:0000314"/>
    <property type="project" value="UniProtKB"/>
</dbReference>
<dbReference type="GO" id="GO:0090729">
    <property type="term" value="F:toxin activity"/>
    <property type="evidence" value="ECO:0007669"/>
    <property type="project" value="UniProtKB-KW"/>
</dbReference>
<dbReference type="GO" id="GO:0006508">
    <property type="term" value="P:proteolysis"/>
    <property type="evidence" value="ECO:0007669"/>
    <property type="project" value="UniProtKB-KW"/>
</dbReference>
<dbReference type="GO" id="GO:0044485">
    <property type="term" value="P:venom-mediated fibrinogenolysis in another organism"/>
    <property type="evidence" value="ECO:0000314"/>
    <property type="project" value="UniProtKB"/>
</dbReference>
<dbReference type="GO" id="GO:0044484">
    <property type="term" value="P:venom-mediated fibrinolysis"/>
    <property type="evidence" value="ECO:0000314"/>
    <property type="project" value="UniProtKB"/>
</dbReference>
<dbReference type="GO" id="GO:0044477">
    <property type="term" value="P:venom-mediated suppression of platelet aggregation"/>
    <property type="evidence" value="ECO:0000314"/>
    <property type="project" value="UniProtKB"/>
</dbReference>
<dbReference type="CDD" id="cd04269">
    <property type="entry name" value="ZnMc_adamalysin_II_like"/>
    <property type="match status" value="1"/>
</dbReference>
<dbReference type="FunFam" id="3.40.390.10:FF:000002">
    <property type="entry name" value="Disintegrin and metalloproteinase domain-containing protein 22"/>
    <property type="match status" value="1"/>
</dbReference>
<dbReference type="Gene3D" id="3.40.390.10">
    <property type="entry name" value="Collagenase (Catalytic Domain)"/>
    <property type="match status" value="1"/>
</dbReference>
<dbReference type="InterPro" id="IPR024079">
    <property type="entry name" value="MetalloPept_cat_dom_sf"/>
</dbReference>
<dbReference type="InterPro" id="IPR001590">
    <property type="entry name" value="Peptidase_M12B"/>
</dbReference>
<dbReference type="InterPro" id="IPR034027">
    <property type="entry name" value="Reprolysin_adamalysin"/>
</dbReference>
<dbReference type="PANTHER" id="PTHR11905">
    <property type="entry name" value="ADAM A DISINTEGRIN AND METALLOPROTEASE DOMAIN"/>
    <property type="match status" value="1"/>
</dbReference>
<dbReference type="PANTHER" id="PTHR11905:SF32">
    <property type="entry name" value="DISINTEGRIN AND METALLOPROTEINASE DOMAIN-CONTAINING PROTEIN 28"/>
    <property type="match status" value="1"/>
</dbReference>
<dbReference type="Pfam" id="PF01421">
    <property type="entry name" value="Reprolysin"/>
    <property type="match status" value="1"/>
</dbReference>
<dbReference type="SUPFAM" id="SSF55486">
    <property type="entry name" value="Metalloproteases ('zincins'), catalytic domain"/>
    <property type="match status" value="1"/>
</dbReference>
<dbReference type="PROSITE" id="PS50215">
    <property type="entry name" value="ADAM_MEPRO"/>
    <property type="match status" value="1"/>
</dbReference>
<comment type="function">
    <text evidence="4">Non-hemorrhagic metalloproteinase that hydrolyzes the alpha chains of fibrinogen and fibrin but has no activity on beta- and gamma-chains. Cleaves X-Leu bonds. Inhibits platelet aggregation induced by the von Willebrand factor (VWF) (IC(50) is 1.4 uM) and type I collagen (IC(50) is 3.2 uM). Acts by cleaving the vWF and its receptor GPIb, and by cleaving the collagen-binding Alpha-2A domain of the collagen receptor alpha-2/beta-1 integrin (ITGA2/ITGB1). Also degrades the extracellular matrix protein fibronectin (FN1), but has no effect on laminin and type I collagen.</text>
</comment>
<comment type="cofactor">
    <cofactor evidence="4">
        <name>Zn(2+)</name>
        <dbReference type="ChEBI" id="CHEBI:29105"/>
    </cofactor>
    <text evidence="2">Binds 1 zinc ion per subunit.</text>
</comment>
<comment type="subunit">
    <text evidence="1">Monomer.</text>
</comment>
<comment type="subcellular location">
    <subcellularLocation>
        <location evidence="4">Secreted</location>
    </subcellularLocation>
</comment>
<comment type="tissue specificity">
    <text evidence="4">Expressed by the venom gland.</text>
</comment>
<comment type="mass spectrometry" mass="23386.0" method="MALDI" evidence="4"/>
<comment type="similarity">
    <text evidence="6">Belongs to the venom metalloproteinase (M12B) family. P-I subfamily.</text>
</comment>
<feature type="chain" id="PRO_0000412998" description="Zinc metalloproteinase barnettlysin-1">
    <location>
        <begin position="1"/>
        <end position="202"/>
    </location>
</feature>
<feature type="domain" description="Peptidase M12B" evidence="3">
    <location>
        <begin position="6"/>
        <end position="200"/>
    </location>
</feature>
<feature type="active site" evidence="2 3">
    <location>
        <position position="143"/>
    </location>
</feature>
<feature type="binding site" evidence="1">
    <location>
        <position position="9"/>
    </location>
    <ligand>
        <name>Ca(2+)</name>
        <dbReference type="ChEBI" id="CHEBI:29108"/>
    </ligand>
</feature>
<feature type="binding site" evidence="1">
    <location>
        <position position="93"/>
    </location>
    <ligand>
        <name>Ca(2+)</name>
        <dbReference type="ChEBI" id="CHEBI:29108"/>
    </ligand>
</feature>
<feature type="binding site" evidence="2 3">
    <location>
        <position position="142"/>
    </location>
    <ligand>
        <name>Zn(2+)</name>
        <dbReference type="ChEBI" id="CHEBI:29105"/>
        <note>catalytic</note>
    </ligand>
</feature>
<feature type="binding site" evidence="2 3">
    <location>
        <position position="146"/>
    </location>
    <ligand>
        <name>Zn(2+)</name>
        <dbReference type="ChEBI" id="CHEBI:29105"/>
        <note>catalytic</note>
    </ligand>
</feature>
<feature type="binding site" evidence="2 3">
    <location>
        <position position="152"/>
    </location>
    <ligand>
        <name>Zn(2+)</name>
        <dbReference type="ChEBI" id="CHEBI:29105"/>
        <note>catalytic</note>
    </ligand>
</feature>
<feature type="binding site" evidence="1">
    <location>
        <position position="197"/>
    </location>
    <ligand>
        <name>Ca(2+)</name>
        <dbReference type="ChEBI" id="CHEBI:29108"/>
    </ligand>
</feature>
<feature type="binding site" evidence="1">
    <location>
        <position position="200"/>
    </location>
    <ligand>
        <name>Ca(2+)</name>
        <dbReference type="ChEBI" id="CHEBI:29108"/>
    </ligand>
</feature>
<feature type="disulfide bond" evidence="2 3">
    <location>
        <begin position="117"/>
        <end position="197"/>
    </location>
</feature>
<feature type="disulfide bond" evidence="2 3">
    <location>
        <begin position="157"/>
        <end position="181"/>
    </location>
</feature>
<feature type="disulfide bond" evidence="2 3">
    <location>
        <begin position="159"/>
        <end position="164"/>
    </location>
</feature>
<proteinExistence type="evidence at protein level"/>
<sequence length="202" mass="22927">TPEQQRYVELFIVVDHGMFMKXXXXXXXXXXXIHQMVNIMKEAYRYLYIDILLTGVEIWSNKDLINVQPAAPQTLDSFGEWRXXXXXXXKSHDNAQLLTSTDFDGPTIGLAYVGSMCDPKRSTAVIQDHSEIDLLVAVTMDHELGHNLGIRHDTGSCSCGGYPCVMSPVISHDISKYFSDCSYIQCWDFIMKENPQCILNKR</sequence>
<organism>
    <name type="scientific">Bothrops barnetti</name>
    <name type="common">Barnett's lancehead</name>
    <name type="synonym">Trimeresurus barnetti</name>
    <dbReference type="NCBI Taxonomy" id="1051630"/>
    <lineage>
        <taxon>Eukaryota</taxon>
        <taxon>Metazoa</taxon>
        <taxon>Chordata</taxon>
        <taxon>Craniata</taxon>
        <taxon>Vertebrata</taxon>
        <taxon>Euteleostomi</taxon>
        <taxon>Lepidosauria</taxon>
        <taxon>Squamata</taxon>
        <taxon>Bifurcata</taxon>
        <taxon>Unidentata</taxon>
        <taxon>Episquamata</taxon>
        <taxon>Toxicofera</taxon>
        <taxon>Serpentes</taxon>
        <taxon>Colubroidea</taxon>
        <taxon>Viperidae</taxon>
        <taxon>Crotalinae</taxon>
        <taxon>Bothrops</taxon>
    </lineage>
</organism>
<protein>
    <recommendedName>
        <fullName evidence="5">Zinc metalloproteinase barnettlysin-1</fullName>
        <ecNumber evidence="4">3.4.24.-</ecNumber>
    </recommendedName>
    <alternativeName>
        <fullName evidence="5">Barnettlysin-I</fullName>
    </alternativeName>
    <alternativeName>
        <fullName>Snake venom metalloproteinase</fullName>
        <shortName>SVMP</shortName>
    </alternativeName>
</protein>
<reference evidence="6" key="1">
    <citation type="journal article" date="2016" name="Biochim. Biophys. Acta">
        <title>A novel fibrinolytic metalloproteinase, barnettlysin-I from Bothrops barnetti (Barnett's pitviper) snake venom with anti-platelet properties.</title>
        <authorList>
            <person name="Sanchez E.F."/>
            <person name="Richardson M."/>
            <person name="Gremski L.H."/>
            <person name="Veiga S.S."/>
            <person name="Yarleque A."/>
            <person name="Niland S."/>
            <person name="Lima A.M."/>
            <person name="Estevao-Costa M.I."/>
            <person name="Eble J.A."/>
        </authorList>
    </citation>
    <scope>PROTEIN SEQUENCE</scope>
    <scope>FUNCTION</scope>
    <scope>COFACTOR</scope>
    <scope>SUBCELLULAR LOCATION</scope>
    <scope>TISSUE SPECIFICITY</scope>
    <scope>MASS SPECTROMETRY</scope>
    <source>
        <tissue evidence="4">Venom</tissue>
    </source>
</reference>
<evidence type="ECO:0000250" key="1"/>
<evidence type="ECO:0000250" key="2">
    <source>
        <dbReference type="UniProtKB" id="P60244"/>
    </source>
</evidence>
<evidence type="ECO:0000255" key="3">
    <source>
        <dbReference type="PROSITE-ProRule" id="PRU00276"/>
    </source>
</evidence>
<evidence type="ECO:0000269" key="4">
    <source>
    </source>
</evidence>
<evidence type="ECO:0000303" key="5">
    <source>
    </source>
</evidence>
<evidence type="ECO:0000305" key="6"/>